<feature type="chain" id="PRO_0000092455" description="Lipoprotein-releasing system ATP-binding protein LolD 2">
    <location>
        <begin position="1"/>
        <end position="255"/>
    </location>
</feature>
<feature type="domain" description="ABC transporter" evidence="1">
    <location>
        <begin position="9"/>
        <end position="254"/>
    </location>
</feature>
<feature type="binding site" evidence="1">
    <location>
        <begin position="45"/>
        <end position="52"/>
    </location>
    <ligand>
        <name>ATP</name>
        <dbReference type="ChEBI" id="CHEBI:30616"/>
    </ligand>
</feature>
<protein>
    <recommendedName>
        <fullName evidence="1">Lipoprotein-releasing system ATP-binding protein LolD 2</fullName>
        <ecNumber evidence="1">7.6.2.-</ecNumber>
    </recommendedName>
</protein>
<dbReference type="EC" id="7.6.2.-" evidence="1"/>
<dbReference type="EMBL" id="BX294145">
    <property type="protein sequence ID" value="CAD75059.1"/>
    <property type="molecule type" value="Genomic_DNA"/>
</dbReference>
<dbReference type="RefSeq" id="NP_867512.1">
    <property type="nucleotide sequence ID" value="NC_005027.1"/>
</dbReference>
<dbReference type="RefSeq" id="WP_007331945.1">
    <property type="nucleotide sequence ID" value="NC_005027.1"/>
</dbReference>
<dbReference type="SMR" id="Q7UPK3"/>
<dbReference type="STRING" id="243090.RB6883"/>
<dbReference type="EnsemblBacteria" id="CAD75059">
    <property type="protein sequence ID" value="CAD75059"/>
    <property type="gene ID" value="RB6883"/>
</dbReference>
<dbReference type="KEGG" id="rba:RB6883"/>
<dbReference type="PATRIC" id="fig|243090.15.peg.3335"/>
<dbReference type="eggNOG" id="COG1136">
    <property type="taxonomic scope" value="Bacteria"/>
</dbReference>
<dbReference type="HOGENOM" id="CLU_000604_1_22_0"/>
<dbReference type="InParanoid" id="Q7UPK3"/>
<dbReference type="OrthoDB" id="273392at2"/>
<dbReference type="Proteomes" id="UP000001025">
    <property type="component" value="Chromosome"/>
</dbReference>
<dbReference type="GO" id="GO:0005886">
    <property type="term" value="C:plasma membrane"/>
    <property type="evidence" value="ECO:0000318"/>
    <property type="project" value="GO_Central"/>
</dbReference>
<dbReference type="GO" id="GO:0005524">
    <property type="term" value="F:ATP binding"/>
    <property type="evidence" value="ECO:0007669"/>
    <property type="project" value="UniProtKB-KW"/>
</dbReference>
<dbReference type="GO" id="GO:0016887">
    <property type="term" value="F:ATP hydrolysis activity"/>
    <property type="evidence" value="ECO:0007669"/>
    <property type="project" value="InterPro"/>
</dbReference>
<dbReference type="GO" id="GO:0022857">
    <property type="term" value="F:transmembrane transporter activity"/>
    <property type="evidence" value="ECO:0000318"/>
    <property type="project" value="GO_Central"/>
</dbReference>
<dbReference type="GO" id="GO:0055085">
    <property type="term" value="P:transmembrane transport"/>
    <property type="evidence" value="ECO:0000318"/>
    <property type="project" value="GO_Central"/>
</dbReference>
<dbReference type="CDD" id="cd03255">
    <property type="entry name" value="ABC_MJ0796_LolCDE_FtsE"/>
    <property type="match status" value="1"/>
</dbReference>
<dbReference type="FunFam" id="3.40.50.300:FF:003895">
    <property type="entry name" value="Lipoprotein-releasing system ATP-binding protein LolD"/>
    <property type="match status" value="1"/>
</dbReference>
<dbReference type="Gene3D" id="3.40.50.300">
    <property type="entry name" value="P-loop containing nucleotide triphosphate hydrolases"/>
    <property type="match status" value="1"/>
</dbReference>
<dbReference type="InterPro" id="IPR003593">
    <property type="entry name" value="AAA+_ATPase"/>
</dbReference>
<dbReference type="InterPro" id="IPR003439">
    <property type="entry name" value="ABC_transporter-like_ATP-bd"/>
</dbReference>
<dbReference type="InterPro" id="IPR017871">
    <property type="entry name" value="ABC_transporter-like_CS"/>
</dbReference>
<dbReference type="InterPro" id="IPR015854">
    <property type="entry name" value="ABC_transpr_LolD-like"/>
</dbReference>
<dbReference type="InterPro" id="IPR017911">
    <property type="entry name" value="MacB-like_ATP-bd"/>
</dbReference>
<dbReference type="InterPro" id="IPR027417">
    <property type="entry name" value="P-loop_NTPase"/>
</dbReference>
<dbReference type="PANTHER" id="PTHR24220">
    <property type="entry name" value="IMPORT ATP-BINDING PROTEIN"/>
    <property type="match status" value="1"/>
</dbReference>
<dbReference type="PANTHER" id="PTHR24220:SF689">
    <property type="entry name" value="LIPOPROTEIN-RELEASING SYSTEM ATP-BINDING PROTEIN LOLD"/>
    <property type="match status" value="1"/>
</dbReference>
<dbReference type="Pfam" id="PF00005">
    <property type="entry name" value="ABC_tran"/>
    <property type="match status" value="1"/>
</dbReference>
<dbReference type="SMART" id="SM00382">
    <property type="entry name" value="AAA"/>
    <property type="match status" value="1"/>
</dbReference>
<dbReference type="SUPFAM" id="SSF52540">
    <property type="entry name" value="P-loop containing nucleoside triphosphate hydrolases"/>
    <property type="match status" value="1"/>
</dbReference>
<dbReference type="PROSITE" id="PS00211">
    <property type="entry name" value="ABC_TRANSPORTER_1"/>
    <property type="match status" value="1"/>
</dbReference>
<dbReference type="PROSITE" id="PS50893">
    <property type="entry name" value="ABC_TRANSPORTER_2"/>
    <property type="match status" value="1"/>
</dbReference>
<dbReference type="PROSITE" id="PS51244">
    <property type="entry name" value="LOLD"/>
    <property type="match status" value="1"/>
</dbReference>
<sequence length="255" mass="28302">MHSSPELLLEARGIRKSYHKDKIELPILRGIDVGFVTGEMSALVGRSGSGKSTLMHLLATLDQPDSGEVWFDGTRIDNQSRARRDQYRNSQIGIIFQFYHLLPELSAIENVLAPAMIRRSVLGYLRDRKSLRLRAEAMLDRVGLLTRSHHQPSEMSGGEMQRVAIARSLMSNPKLLLADEPTGNLDTETGATILSLLRELNREDELTIVMITHDDSIAETADRCYRMCDGLLEDNASNLAGGDRSDSAKLETVAA</sequence>
<proteinExistence type="inferred from homology"/>
<keyword id="KW-0067">ATP-binding</keyword>
<keyword id="KW-0997">Cell inner membrane</keyword>
<keyword id="KW-1003">Cell membrane</keyword>
<keyword id="KW-0472">Membrane</keyword>
<keyword id="KW-0547">Nucleotide-binding</keyword>
<keyword id="KW-1185">Reference proteome</keyword>
<keyword id="KW-1278">Translocase</keyword>
<keyword id="KW-0813">Transport</keyword>
<accession>Q7UPK3</accession>
<organism>
    <name type="scientific">Rhodopirellula baltica (strain DSM 10527 / NCIMB 13988 / SH1)</name>
    <dbReference type="NCBI Taxonomy" id="243090"/>
    <lineage>
        <taxon>Bacteria</taxon>
        <taxon>Pseudomonadati</taxon>
        <taxon>Planctomycetota</taxon>
        <taxon>Planctomycetia</taxon>
        <taxon>Pirellulales</taxon>
        <taxon>Pirellulaceae</taxon>
        <taxon>Rhodopirellula</taxon>
    </lineage>
</organism>
<name>LOLD2_RHOBA</name>
<reference key="1">
    <citation type="journal article" date="2003" name="Proc. Natl. Acad. Sci. U.S.A.">
        <title>Complete genome sequence of the marine planctomycete Pirellula sp. strain 1.</title>
        <authorList>
            <person name="Gloeckner F.O."/>
            <person name="Kube M."/>
            <person name="Bauer M."/>
            <person name="Teeling H."/>
            <person name="Lombardot T."/>
            <person name="Ludwig W."/>
            <person name="Gade D."/>
            <person name="Beck A."/>
            <person name="Borzym K."/>
            <person name="Heitmann K."/>
            <person name="Rabus R."/>
            <person name="Schlesner H."/>
            <person name="Amann R."/>
            <person name="Reinhardt R."/>
        </authorList>
    </citation>
    <scope>NUCLEOTIDE SEQUENCE [LARGE SCALE GENOMIC DNA]</scope>
    <source>
        <strain>DSM 10527 / NCIMB 13988 / SH1</strain>
    </source>
</reference>
<comment type="function">
    <text evidence="1">Part of the ABC transporter complex LolCDE involved in the translocation of mature outer membrane-directed lipoproteins, from the inner membrane to the periplasmic chaperone, LolA. Responsible for the formation of the LolA-lipoprotein complex in an ATP-dependent manner.</text>
</comment>
<comment type="subunit">
    <text evidence="1">The complex is composed of two ATP-binding proteins (LolD) and two transmembrane proteins (LolC and LolE).</text>
</comment>
<comment type="subcellular location">
    <subcellularLocation>
        <location evidence="1">Cell inner membrane</location>
        <topology evidence="1">Peripheral membrane protein</topology>
    </subcellularLocation>
</comment>
<comment type="similarity">
    <text evidence="1">Belongs to the ABC transporter superfamily. Lipoprotein translocase (TC 3.A.1.125) family.</text>
</comment>
<evidence type="ECO:0000255" key="1">
    <source>
        <dbReference type="HAMAP-Rule" id="MF_01708"/>
    </source>
</evidence>
<gene>
    <name evidence="1" type="primary">lolD2</name>
    <name type="ordered locus">RB6883</name>
</gene>